<evidence type="ECO:0000255" key="1">
    <source>
        <dbReference type="HAMAP-Rule" id="MF_00218"/>
    </source>
</evidence>
<comment type="function">
    <text evidence="1">Catalyzes the decarboxylation of four acetate groups of uroporphyrinogen-III to yield coproporphyrinogen-III.</text>
</comment>
<comment type="catalytic activity">
    <reaction evidence="1">
        <text>uroporphyrinogen III + 4 H(+) = coproporphyrinogen III + 4 CO2</text>
        <dbReference type="Rhea" id="RHEA:19865"/>
        <dbReference type="ChEBI" id="CHEBI:15378"/>
        <dbReference type="ChEBI" id="CHEBI:16526"/>
        <dbReference type="ChEBI" id="CHEBI:57308"/>
        <dbReference type="ChEBI" id="CHEBI:57309"/>
        <dbReference type="EC" id="4.1.1.37"/>
    </reaction>
</comment>
<comment type="pathway">
    <text evidence="1">Porphyrin-containing compound metabolism; protoporphyrin-IX biosynthesis; coproporphyrinogen-III from 5-aminolevulinate: step 4/4.</text>
</comment>
<comment type="subunit">
    <text evidence="1">Homodimer.</text>
</comment>
<comment type="subcellular location">
    <subcellularLocation>
        <location evidence="1">Cytoplasm</location>
    </subcellularLocation>
</comment>
<comment type="similarity">
    <text evidence="1">Belongs to the uroporphyrinogen decarboxylase family.</text>
</comment>
<accession>A8AKS6</accession>
<name>DCUP_CITK8</name>
<organism>
    <name type="scientific">Citrobacter koseri (strain ATCC BAA-895 / CDC 4225-83 / SGSC4696)</name>
    <dbReference type="NCBI Taxonomy" id="290338"/>
    <lineage>
        <taxon>Bacteria</taxon>
        <taxon>Pseudomonadati</taxon>
        <taxon>Pseudomonadota</taxon>
        <taxon>Gammaproteobacteria</taxon>
        <taxon>Enterobacterales</taxon>
        <taxon>Enterobacteriaceae</taxon>
        <taxon>Citrobacter</taxon>
    </lineage>
</organism>
<reference key="1">
    <citation type="submission" date="2007-08" db="EMBL/GenBank/DDBJ databases">
        <authorList>
            <consortium name="The Citrobacter koseri Genome Sequencing Project"/>
            <person name="McClelland M."/>
            <person name="Sanderson E.K."/>
            <person name="Porwollik S."/>
            <person name="Spieth J."/>
            <person name="Clifton W.S."/>
            <person name="Latreille P."/>
            <person name="Courtney L."/>
            <person name="Wang C."/>
            <person name="Pepin K."/>
            <person name="Bhonagiri V."/>
            <person name="Nash W."/>
            <person name="Johnson M."/>
            <person name="Thiruvilangam P."/>
            <person name="Wilson R."/>
        </authorList>
    </citation>
    <scope>NUCLEOTIDE SEQUENCE [LARGE SCALE GENOMIC DNA]</scope>
    <source>
        <strain>ATCC BAA-895 / CDC 4225-83 / SGSC4696</strain>
    </source>
</reference>
<feature type="chain" id="PRO_1000023898" description="Uroporphyrinogen decarboxylase">
    <location>
        <begin position="1"/>
        <end position="354"/>
    </location>
</feature>
<feature type="binding site" evidence="1">
    <location>
        <begin position="27"/>
        <end position="31"/>
    </location>
    <ligand>
        <name>substrate</name>
    </ligand>
</feature>
<feature type="binding site" evidence="1">
    <location>
        <position position="77"/>
    </location>
    <ligand>
        <name>substrate</name>
    </ligand>
</feature>
<feature type="binding site" evidence="1">
    <location>
        <position position="154"/>
    </location>
    <ligand>
        <name>substrate</name>
    </ligand>
</feature>
<feature type="binding site" evidence="1">
    <location>
        <position position="209"/>
    </location>
    <ligand>
        <name>substrate</name>
    </ligand>
</feature>
<feature type="binding site" evidence="1">
    <location>
        <position position="327"/>
    </location>
    <ligand>
        <name>substrate</name>
    </ligand>
</feature>
<feature type="site" description="Transition state stabilizer" evidence="1">
    <location>
        <position position="77"/>
    </location>
</feature>
<proteinExistence type="inferred from homology"/>
<gene>
    <name evidence="1" type="primary">hemE</name>
    <name type="ordered locus">CKO_02989</name>
</gene>
<protein>
    <recommendedName>
        <fullName evidence="1">Uroporphyrinogen decarboxylase</fullName>
        <shortName evidence="1">UPD</shortName>
        <shortName evidence="1">URO-D</shortName>
        <ecNumber evidence="1">4.1.1.37</ecNumber>
    </recommendedName>
</protein>
<dbReference type="EC" id="4.1.1.37" evidence="1"/>
<dbReference type="EMBL" id="CP000822">
    <property type="protein sequence ID" value="ABV14089.1"/>
    <property type="molecule type" value="Genomic_DNA"/>
</dbReference>
<dbReference type="RefSeq" id="WP_012133798.1">
    <property type="nucleotide sequence ID" value="NC_009792.1"/>
</dbReference>
<dbReference type="SMR" id="A8AKS6"/>
<dbReference type="STRING" id="290338.CKO_02989"/>
<dbReference type="GeneID" id="45136803"/>
<dbReference type="KEGG" id="cko:CKO_02989"/>
<dbReference type="HOGENOM" id="CLU_040933_0_0_6"/>
<dbReference type="OrthoDB" id="9806656at2"/>
<dbReference type="UniPathway" id="UPA00251">
    <property type="reaction ID" value="UER00321"/>
</dbReference>
<dbReference type="Proteomes" id="UP000008148">
    <property type="component" value="Chromosome"/>
</dbReference>
<dbReference type="GO" id="GO:0005829">
    <property type="term" value="C:cytosol"/>
    <property type="evidence" value="ECO:0007669"/>
    <property type="project" value="TreeGrafter"/>
</dbReference>
<dbReference type="GO" id="GO:0004853">
    <property type="term" value="F:uroporphyrinogen decarboxylase activity"/>
    <property type="evidence" value="ECO:0007669"/>
    <property type="project" value="UniProtKB-UniRule"/>
</dbReference>
<dbReference type="GO" id="GO:0019353">
    <property type="term" value="P:protoporphyrinogen IX biosynthetic process from glutamate"/>
    <property type="evidence" value="ECO:0007669"/>
    <property type="project" value="TreeGrafter"/>
</dbReference>
<dbReference type="CDD" id="cd00717">
    <property type="entry name" value="URO-D"/>
    <property type="match status" value="1"/>
</dbReference>
<dbReference type="FunFam" id="3.20.20.210:FF:000001">
    <property type="entry name" value="Uroporphyrinogen decarboxylase"/>
    <property type="match status" value="1"/>
</dbReference>
<dbReference type="Gene3D" id="3.20.20.210">
    <property type="match status" value="1"/>
</dbReference>
<dbReference type="HAMAP" id="MF_00218">
    <property type="entry name" value="URO_D"/>
    <property type="match status" value="1"/>
</dbReference>
<dbReference type="InterPro" id="IPR038071">
    <property type="entry name" value="UROD/MetE-like_sf"/>
</dbReference>
<dbReference type="InterPro" id="IPR006361">
    <property type="entry name" value="Uroporphyrinogen_deCO2ase_HemE"/>
</dbReference>
<dbReference type="InterPro" id="IPR000257">
    <property type="entry name" value="Uroporphyrinogen_deCOase"/>
</dbReference>
<dbReference type="NCBIfam" id="TIGR01464">
    <property type="entry name" value="hemE"/>
    <property type="match status" value="1"/>
</dbReference>
<dbReference type="PANTHER" id="PTHR21091">
    <property type="entry name" value="METHYLTETRAHYDROFOLATE:HOMOCYSTEINE METHYLTRANSFERASE RELATED"/>
    <property type="match status" value="1"/>
</dbReference>
<dbReference type="PANTHER" id="PTHR21091:SF169">
    <property type="entry name" value="UROPORPHYRINOGEN DECARBOXYLASE"/>
    <property type="match status" value="1"/>
</dbReference>
<dbReference type="Pfam" id="PF01208">
    <property type="entry name" value="URO-D"/>
    <property type="match status" value="1"/>
</dbReference>
<dbReference type="SUPFAM" id="SSF51726">
    <property type="entry name" value="UROD/MetE-like"/>
    <property type="match status" value="1"/>
</dbReference>
<dbReference type="PROSITE" id="PS00906">
    <property type="entry name" value="UROD_1"/>
    <property type="match status" value="1"/>
</dbReference>
<dbReference type="PROSITE" id="PS00907">
    <property type="entry name" value="UROD_2"/>
    <property type="match status" value="1"/>
</dbReference>
<keyword id="KW-0963">Cytoplasm</keyword>
<keyword id="KW-0210">Decarboxylase</keyword>
<keyword id="KW-0456">Lyase</keyword>
<keyword id="KW-0627">Porphyrin biosynthesis</keyword>
<keyword id="KW-1185">Reference proteome</keyword>
<sequence>MTELKNDRYLRALLRQPVDVTPVWMMRQAGRYLPEYKATRAQAGDFMSLCKNAELACEVTLQPLRRYPLDAAILFSDILTIPDAMGLGLYFEAGEGPRFTSPVACKADVDKLPIPDPEDELGYVMNAVRTIRRELKGDVPLIGFSGSPWTLATYMVEGGSSKAFTVIKKMMYADPQALHALLDKLAKSVTLYLNAQIKAGAQSVMIFDTWGGVLTGRDYQQFSLYYMHKIVDGLLRENDGRRVPVTLFTKGGGQWLEAMAETGCDALGLDWTTDIADARRRVGHKVALQGNMDPSMLYAPPARIEEEVATILAGFGQGEGHVFNLGHGIHQDVPPEHAGAFVDAVHRLSEQYHR</sequence>